<comment type="function">
    <text evidence="1">One of the primary rRNA binding proteins, it binds directly to 16S rRNA where it nucleates assembly of the body of the 30S subunit.</text>
</comment>
<comment type="function">
    <text evidence="1">With S5 and S12 plays an important role in translational accuracy.</text>
</comment>
<comment type="subunit">
    <text evidence="1">Part of the 30S ribosomal subunit. Contacts protein S5. The interaction surface between S4 and S5 is involved in control of translational fidelity.</text>
</comment>
<comment type="similarity">
    <text evidence="1">Belongs to the universal ribosomal protein uS4 family.</text>
</comment>
<gene>
    <name evidence="1" type="primary">rpsD1</name>
    <name type="ordered locus">Amet_4450</name>
</gene>
<sequence>MARYTDAVCRLCRREGLKLYLKGERCYTDKCAITKRNFAPGQHGTSRKKLSNYGVQLREKQKAKRFYGVLESQFRKYFDMADKQAGNTGENLLRILETRLDNLVYRLGLASSRAEARQLVVHGHFTVNGGKVDIPSYLVKAGDAVAVSEKSTNSPKFKELKENFKGTVPTWLTVDSEKLEGKVAAMPSREDIDLPISENLIVELYSK</sequence>
<proteinExistence type="inferred from homology"/>
<organism>
    <name type="scientific">Alkaliphilus metalliredigens (strain QYMF)</name>
    <dbReference type="NCBI Taxonomy" id="293826"/>
    <lineage>
        <taxon>Bacteria</taxon>
        <taxon>Bacillati</taxon>
        <taxon>Bacillota</taxon>
        <taxon>Clostridia</taxon>
        <taxon>Peptostreptococcales</taxon>
        <taxon>Natronincolaceae</taxon>
        <taxon>Alkaliphilus</taxon>
    </lineage>
</organism>
<feature type="chain" id="PRO_0000322261" description="Small ribosomal subunit protein uS4A">
    <location>
        <begin position="1"/>
        <end position="207"/>
    </location>
</feature>
<feature type="domain" description="S4 RNA-binding" evidence="1">
    <location>
        <begin position="98"/>
        <end position="163"/>
    </location>
</feature>
<protein>
    <recommendedName>
        <fullName evidence="1">Small ribosomal subunit protein uS4A</fullName>
    </recommendedName>
    <alternativeName>
        <fullName evidence="2">30S ribosomal protein S4 1</fullName>
    </alternativeName>
</protein>
<reference key="1">
    <citation type="journal article" date="2016" name="Genome Announc.">
        <title>Complete genome sequence of Alkaliphilus metalliredigens strain QYMF, an alkaliphilic and metal-reducing bacterium isolated from borax-contaminated leachate ponds.</title>
        <authorList>
            <person name="Hwang C."/>
            <person name="Copeland A."/>
            <person name="Lucas S."/>
            <person name="Lapidus A."/>
            <person name="Barry K."/>
            <person name="Detter J.C."/>
            <person name="Glavina Del Rio T."/>
            <person name="Hammon N."/>
            <person name="Israni S."/>
            <person name="Dalin E."/>
            <person name="Tice H."/>
            <person name="Pitluck S."/>
            <person name="Chertkov O."/>
            <person name="Brettin T."/>
            <person name="Bruce D."/>
            <person name="Han C."/>
            <person name="Schmutz J."/>
            <person name="Larimer F."/>
            <person name="Land M.L."/>
            <person name="Hauser L."/>
            <person name="Kyrpides N."/>
            <person name="Mikhailova N."/>
            <person name="Ye Q."/>
            <person name="Zhou J."/>
            <person name="Richardson P."/>
            <person name="Fields M.W."/>
        </authorList>
    </citation>
    <scope>NUCLEOTIDE SEQUENCE [LARGE SCALE GENOMIC DNA]</scope>
    <source>
        <strain>QYMF</strain>
    </source>
</reference>
<keyword id="KW-1185">Reference proteome</keyword>
<keyword id="KW-0687">Ribonucleoprotein</keyword>
<keyword id="KW-0689">Ribosomal protein</keyword>
<keyword id="KW-0694">RNA-binding</keyword>
<keyword id="KW-0699">rRNA-binding</keyword>
<dbReference type="EMBL" id="CP000724">
    <property type="protein sequence ID" value="ABR50522.1"/>
    <property type="molecule type" value="Genomic_DNA"/>
</dbReference>
<dbReference type="RefSeq" id="WP_012065414.1">
    <property type="nucleotide sequence ID" value="NC_009633.1"/>
</dbReference>
<dbReference type="SMR" id="A6TWF4"/>
<dbReference type="STRING" id="293826.Amet_4450"/>
<dbReference type="KEGG" id="amt:Amet_4450"/>
<dbReference type="eggNOG" id="COG0522">
    <property type="taxonomic scope" value="Bacteria"/>
</dbReference>
<dbReference type="HOGENOM" id="CLU_092403_0_1_9"/>
<dbReference type="OrthoDB" id="9803672at2"/>
<dbReference type="Proteomes" id="UP000001572">
    <property type="component" value="Chromosome"/>
</dbReference>
<dbReference type="GO" id="GO:0015935">
    <property type="term" value="C:small ribosomal subunit"/>
    <property type="evidence" value="ECO:0007669"/>
    <property type="project" value="InterPro"/>
</dbReference>
<dbReference type="GO" id="GO:0019843">
    <property type="term" value="F:rRNA binding"/>
    <property type="evidence" value="ECO:0007669"/>
    <property type="project" value="UniProtKB-UniRule"/>
</dbReference>
<dbReference type="GO" id="GO:0003735">
    <property type="term" value="F:structural constituent of ribosome"/>
    <property type="evidence" value="ECO:0007669"/>
    <property type="project" value="InterPro"/>
</dbReference>
<dbReference type="GO" id="GO:0042274">
    <property type="term" value="P:ribosomal small subunit biogenesis"/>
    <property type="evidence" value="ECO:0007669"/>
    <property type="project" value="TreeGrafter"/>
</dbReference>
<dbReference type="GO" id="GO:0006412">
    <property type="term" value="P:translation"/>
    <property type="evidence" value="ECO:0007669"/>
    <property type="project" value="UniProtKB-UniRule"/>
</dbReference>
<dbReference type="CDD" id="cd00165">
    <property type="entry name" value="S4"/>
    <property type="match status" value="1"/>
</dbReference>
<dbReference type="FunFam" id="1.10.1050.10:FF:000001">
    <property type="entry name" value="30S ribosomal protein S4"/>
    <property type="match status" value="1"/>
</dbReference>
<dbReference type="FunFam" id="3.10.290.10:FF:000001">
    <property type="entry name" value="30S ribosomal protein S4"/>
    <property type="match status" value="1"/>
</dbReference>
<dbReference type="Gene3D" id="1.10.1050.10">
    <property type="entry name" value="Ribosomal Protein S4 Delta 41, Chain A, domain 1"/>
    <property type="match status" value="1"/>
</dbReference>
<dbReference type="Gene3D" id="3.10.290.10">
    <property type="entry name" value="RNA-binding S4 domain"/>
    <property type="match status" value="1"/>
</dbReference>
<dbReference type="HAMAP" id="MF_01306_B">
    <property type="entry name" value="Ribosomal_uS4_B"/>
    <property type="match status" value="1"/>
</dbReference>
<dbReference type="InterPro" id="IPR022801">
    <property type="entry name" value="Ribosomal_uS4"/>
</dbReference>
<dbReference type="InterPro" id="IPR005709">
    <property type="entry name" value="Ribosomal_uS4_bac-type"/>
</dbReference>
<dbReference type="InterPro" id="IPR018079">
    <property type="entry name" value="Ribosomal_uS4_CS"/>
</dbReference>
<dbReference type="InterPro" id="IPR001912">
    <property type="entry name" value="Ribosomal_uS4_N"/>
</dbReference>
<dbReference type="InterPro" id="IPR002942">
    <property type="entry name" value="S4_RNA-bd"/>
</dbReference>
<dbReference type="InterPro" id="IPR036986">
    <property type="entry name" value="S4_RNA-bd_sf"/>
</dbReference>
<dbReference type="NCBIfam" id="NF003717">
    <property type="entry name" value="PRK05327.1"/>
    <property type="match status" value="1"/>
</dbReference>
<dbReference type="NCBIfam" id="TIGR01017">
    <property type="entry name" value="rpsD_bact"/>
    <property type="match status" value="1"/>
</dbReference>
<dbReference type="PANTHER" id="PTHR11831">
    <property type="entry name" value="30S 40S RIBOSOMAL PROTEIN"/>
    <property type="match status" value="1"/>
</dbReference>
<dbReference type="PANTHER" id="PTHR11831:SF4">
    <property type="entry name" value="SMALL RIBOSOMAL SUBUNIT PROTEIN US4M"/>
    <property type="match status" value="1"/>
</dbReference>
<dbReference type="Pfam" id="PF00163">
    <property type="entry name" value="Ribosomal_S4"/>
    <property type="match status" value="1"/>
</dbReference>
<dbReference type="Pfam" id="PF01479">
    <property type="entry name" value="S4"/>
    <property type="match status" value="1"/>
</dbReference>
<dbReference type="SMART" id="SM01390">
    <property type="entry name" value="Ribosomal_S4"/>
    <property type="match status" value="1"/>
</dbReference>
<dbReference type="SMART" id="SM00363">
    <property type="entry name" value="S4"/>
    <property type="match status" value="1"/>
</dbReference>
<dbReference type="SUPFAM" id="SSF55174">
    <property type="entry name" value="Alpha-L RNA-binding motif"/>
    <property type="match status" value="1"/>
</dbReference>
<dbReference type="PROSITE" id="PS00632">
    <property type="entry name" value="RIBOSOMAL_S4"/>
    <property type="match status" value="1"/>
</dbReference>
<dbReference type="PROSITE" id="PS50889">
    <property type="entry name" value="S4"/>
    <property type="match status" value="1"/>
</dbReference>
<evidence type="ECO:0000255" key="1">
    <source>
        <dbReference type="HAMAP-Rule" id="MF_01306"/>
    </source>
</evidence>
<evidence type="ECO:0000305" key="2"/>
<name>RS4A_ALKMQ</name>
<accession>A6TWF4</accession>